<gene>
    <name evidence="1" type="primary">rplQ</name>
    <name evidence="1" type="synonym">rpl17</name>
    <name type="ordered locus">SynRCC307_2140</name>
</gene>
<keyword id="KW-1185">Reference proteome</keyword>
<keyword id="KW-0687">Ribonucleoprotein</keyword>
<keyword id="KW-0689">Ribosomal protein</keyword>
<sequence length="116" mass="13237">MRHQCRVPQLGRPADQRKAMLRGLTTQLIREGRVTTTKARAKALRDETERMISLAKDGSLAARRRALGYIYDKQLVHALFDKASERYGDRNGGYTRIIRTVPRRGDNAEMAIIELV</sequence>
<comment type="subunit">
    <text evidence="1">Part of the 50S ribosomal subunit. Contacts protein L32.</text>
</comment>
<comment type="similarity">
    <text evidence="1">Belongs to the bacterial ribosomal protein bL17 family.</text>
</comment>
<proteinExistence type="inferred from homology"/>
<feature type="chain" id="PRO_1000055977" description="Large ribosomal subunit protein bL17">
    <location>
        <begin position="1"/>
        <end position="116"/>
    </location>
</feature>
<name>RL17_SYNR3</name>
<evidence type="ECO:0000255" key="1">
    <source>
        <dbReference type="HAMAP-Rule" id="MF_01368"/>
    </source>
</evidence>
<evidence type="ECO:0000305" key="2"/>
<reference key="1">
    <citation type="submission" date="2006-05" db="EMBL/GenBank/DDBJ databases">
        <authorList>
            <consortium name="Genoscope"/>
        </authorList>
    </citation>
    <scope>NUCLEOTIDE SEQUENCE [LARGE SCALE GENOMIC DNA]</scope>
    <source>
        <strain>RCC307</strain>
    </source>
</reference>
<dbReference type="EMBL" id="CT978603">
    <property type="protein sequence ID" value="CAK29043.1"/>
    <property type="molecule type" value="Genomic_DNA"/>
</dbReference>
<dbReference type="SMR" id="A5GVY4"/>
<dbReference type="STRING" id="316278.SynRCC307_2140"/>
<dbReference type="KEGG" id="syr:SynRCC307_2140"/>
<dbReference type="eggNOG" id="COG0203">
    <property type="taxonomic scope" value="Bacteria"/>
</dbReference>
<dbReference type="HOGENOM" id="CLU_074407_2_2_3"/>
<dbReference type="OrthoDB" id="9809073at2"/>
<dbReference type="Proteomes" id="UP000001115">
    <property type="component" value="Chromosome"/>
</dbReference>
<dbReference type="GO" id="GO:0022625">
    <property type="term" value="C:cytosolic large ribosomal subunit"/>
    <property type="evidence" value="ECO:0007669"/>
    <property type="project" value="TreeGrafter"/>
</dbReference>
<dbReference type="GO" id="GO:0003735">
    <property type="term" value="F:structural constituent of ribosome"/>
    <property type="evidence" value="ECO:0007669"/>
    <property type="project" value="InterPro"/>
</dbReference>
<dbReference type="GO" id="GO:0006412">
    <property type="term" value="P:translation"/>
    <property type="evidence" value="ECO:0007669"/>
    <property type="project" value="UniProtKB-UniRule"/>
</dbReference>
<dbReference type="FunFam" id="3.90.1030.10:FF:000001">
    <property type="entry name" value="50S ribosomal protein L17"/>
    <property type="match status" value="1"/>
</dbReference>
<dbReference type="Gene3D" id="3.90.1030.10">
    <property type="entry name" value="Ribosomal protein L17"/>
    <property type="match status" value="1"/>
</dbReference>
<dbReference type="HAMAP" id="MF_01368">
    <property type="entry name" value="Ribosomal_bL17"/>
    <property type="match status" value="1"/>
</dbReference>
<dbReference type="InterPro" id="IPR000456">
    <property type="entry name" value="Ribosomal_bL17"/>
</dbReference>
<dbReference type="InterPro" id="IPR036373">
    <property type="entry name" value="Ribosomal_bL17_sf"/>
</dbReference>
<dbReference type="NCBIfam" id="TIGR00059">
    <property type="entry name" value="L17"/>
    <property type="match status" value="1"/>
</dbReference>
<dbReference type="PANTHER" id="PTHR14413:SF16">
    <property type="entry name" value="LARGE RIBOSOMAL SUBUNIT PROTEIN BL17M"/>
    <property type="match status" value="1"/>
</dbReference>
<dbReference type="PANTHER" id="PTHR14413">
    <property type="entry name" value="RIBOSOMAL PROTEIN L17"/>
    <property type="match status" value="1"/>
</dbReference>
<dbReference type="Pfam" id="PF01196">
    <property type="entry name" value="Ribosomal_L17"/>
    <property type="match status" value="1"/>
</dbReference>
<dbReference type="SUPFAM" id="SSF64263">
    <property type="entry name" value="Prokaryotic ribosomal protein L17"/>
    <property type="match status" value="1"/>
</dbReference>
<protein>
    <recommendedName>
        <fullName evidence="1">Large ribosomal subunit protein bL17</fullName>
    </recommendedName>
    <alternativeName>
        <fullName evidence="2">50S ribosomal protein L17</fullName>
    </alternativeName>
</protein>
<accession>A5GVY4</accession>
<organism>
    <name type="scientific">Synechococcus sp. (strain RCC307)</name>
    <dbReference type="NCBI Taxonomy" id="316278"/>
    <lineage>
        <taxon>Bacteria</taxon>
        <taxon>Bacillati</taxon>
        <taxon>Cyanobacteriota</taxon>
        <taxon>Cyanophyceae</taxon>
        <taxon>Synechococcales</taxon>
        <taxon>Synechococcaceae</taxon>
        <taxon>Synechococcus</taxon>
    </lineage>
</organism>